<comment type="function">
    <text evidence="2 6 12 14">Occurs in almost all aerobically respiring organisms and serves to protect cells from the toxic effects of hydrogen peroxide (By similarity). May prevent the excessive accumulation of H(2)O(2) during water stress in response to the accumulation of abscisic acid (ABA) (PubMed:21398647). Involved in the modulation of ROS levels related to root growth regulation (Ref.11). Required for pollen viability and floret fertility upon heat stress (HS) by detoxifying reactive oxygen species (ROS) and malondialdehyde (MDA) accumulation in developing anthers exposed to HS (PubMed:29464319).</text>
</comment>
<comment type="catalytic activity">
    <reaction evidence="4 7">
        <text>2 H2O2 = O2 + 2 H2O</text>
        <dbReference type="Rhea" id="RHEA:20309"/>
        <dbReference type="ChEBI" id="CHEBI:15377"/>
        <dbReference type="ChEBI" id="CHEBI:15379"/>
        <dbReference type="ChEBI" id="CHEBI:16240"/>
        <dbReference type="EC" id="1.11.1.6"/>
    </reaction>
</comment>
<comment type="cofactor">
    <cofactor evidence="3">
        <name>heme</name>
        <dbReference type="ChEBI" id="CHEBI:30413"/>
    </cofactor>
</comment>
<comment type="activity regulation">
    <text evidence="7">Strongly inhibited by beta-mercaptoethanol, sodium azide and potassium cyanide. Slightly repressed by 3-amino-1,2,4-triazole (3-AT). Activity is repressed proportionally to increased concentration of NaCl, KCl, LiCl and MgCl(2).</text>
</comment>
<comment type="biophysicochemical properties">
    <kinetics>
        <KM evidence="7">66.7 mM for H(2)O(2) (at pH 7.5)</KM>
        <Vmax evidence="7">1.0 umol/min/g enzyme (at pH 7.5)</Vmax>
        <text evidence="7">kcat is 20 min(-1) with H(2)O(2) as substrate (at pH 7.5).</text>
    </kinetics>
    <phDependence>
        <text evidence="7">Optimum pH is 7.5.</text>
    </phDependence>
    <temperatureDependence>
        <text evidence="7">Optimum temperature is 25 degrees Celsius.</text>
    </temperatureDependence>
</comment>
<comment type="subunit">
    <text evidence="3 10 13">Homotetramer (By similarity). Interacts with GLO1 and GLO4; these interactions are disturbed by alpha-hydroxy-2-pyridinemethanesulfonic acid (HPMS) and salicylic acid (SA) (PubMed:26900141). Interacts with STRK1 at the plasma membrane (PubMed:29581216).</text>
</comment>
<comment type="subcellular location">
    <subcellularLocation>
        <location evidence="10 16">Peroxisome</location>
    </subcellularLocation>
    <subcellularLocation>
        <location evidence="15">Glyoxysome</location>
    </subcellularLocation>
    <subcellularLocation>
        <location evidence="13">Cell membrane</location>
    </subcellularLocation>
</comment>
<comment type="tissue specificity">
    <text evidence="6 7 8 10 12 14">Predominantly expressed in roots and, at low levels, in leaves (e.g. sheaths) (PubMed:21398647, PubMed:26900141, PubMed:29464319, Ref.11). Detected in seeds (PubMed:21398647, PubMed:21979082, PubMed:29464319, Ref.11). Also present in panicles and culms (PubMed:22106097, Ref.11). Observed in stems and anthers (PubMed:29464319).</text>
</comment>
<comment type="induction">
    <text evidence="6 9 11 12 14">Abundance in roots follows a diurnal oscillating expression pattern peaking during the night period (Ref.11). Induced by water stress and abscisic acid (ABA) in a concentration-dependent manner (PubMed:21398647, Ref.11). Activated by salicylic acid (SA) (PubMed:29464319). Repressed by ABA biosynthesis inhibitors nordihydroguaiaretic acid and tungstate under water stress (PubMed:21398647). Induced by high salinity (NaCl) and hydrogen peroxide (H(2)O(2)) treatments (Ref.11). Triggered by zinc oxide nanoparticles (ZnO NPs); this induction is reversed by sodium nitroprusside (SNP, a NO donor) (PubMed:25958266). Repressed by cadmium (Cd) (PubMed:28969789). Inhibited by heat stress (HS) (e.g. 35 degrees Celsius day/27 degrees Celsius night, 38 degrees Celsius day/30 degrees Celsius night) (PubMed:29464319).</text>
</comment>
<comment type="similarity">
    <text evidence="15">Belongs to the catalase family.</text>
</comment>
<accession>Q0D9C4</accession>
<accession>B7EGE0</accession>
<accession>P55309</accession>
<accession>Q4PJT9</accession>
<accession>Q5Z7P3</accession>
<accession>Q9SB22</accession>
<protein>
    <recommendedName>
        <fullName>Catalase isozyme B</fullName>
        <shortName>CAT-B</shortName>
        <ecNumber evidence="4 7">1.11.1.6</ecNumber>
    </recommendedName>
</protein>
<evidence type="ECO:0000250" key="1">
    <source>
        <dbReference type="UniProtKB" id="Q10S82"/>
    </source>
</evidence>
<evidence type="ECO:0000250" key="2">
    <source>
        <dbReference type="UniProtKB" id="Q55DH8"/>
    </source>
</evidence>
<evidence type="ECO:0000250" key="3">
    <source>
        <dbReference type="UniProtKB" id="Q9C168"/>
    </source>
</evidence>
<evidence type="ECO:0000255" key="4">
    <source>
        <dbReference type="PROSITE-ProRule" id="PRU10013"/>
    </source>
</evidence>
<evidence type="ECO:0000256" key="5">
    <source>
        <dbReference type="SAM" id="MobiDB-lite"/>
    </source>
</evidence>
<evidence type="ECO:0000269" key="6">
    <source>
    </source>
</evidence>
<evidence type="ECO:0000269" key="7">
    <source>
    </source>
</evidence>
<evidence type="ECO:0000269" key="8">
    <source>
    </source>
</evidence>
<evidence type="ECO:0000269" key="9">
    <source>
    </source>
</evidence>
<evidence type="ECO:0000269" key="10">
    <source>
    </source>
</evidence>
<evidence type="ECO:0000269" key="11">
    <source>
    </source>
</evidence>
<evidence type="ECO:0000269" key="12">
    <source>
    </source>
</evidence>
<evidence type="ECO:0000269" key="13">
    <source>
    </source>
</evidence>
<evidence type="ECO:0000269" key="14">
    <source ref="11"/>
</evidence>
<evidence type="ECO:0000305" key="15"/>
<evidence type="ECO:0000305" key="16">
    <source>
    </source>
</evidence>
<keyword id="KW-1003">Cell membrane</keyword>
<keyword id="KW-0330">Glyoxysome</keyword>
<keyword id="KW-0349">Heme</keyword>
<keyword id="KW-0376">Hydrogen peroxide</keyword>
<keyword id="KW-0408">Iron</keyword>
<keyword id="KW-0472">Membrane</keyword>
<keyword id="KW-0479">Metal-binding</keyword>
<keyword id="KW-0560">Oxidoreductase</keyword>
<keyword id="KW-0575">Peroxidase</keyword>
<keyword id="KW-0576">Peroxisome</keyword>
<keyword id="KW-0597">Phosphoprotein</keyword>
<keyword id="KW-1185">Reference proteome</keyword>
<keyword id="KW-0346">Stress response</keyword>
<keyword id="KW-0883">Thioether bond</keyword>
<organism>
    <name type="scientific">Oryza sativa subsp. japonica</name>
    <name type="common">Rice</name>
    <dbReference type="NCBI Taxonomy" id="39947"/>
    <lineage>
        <taxon>Eukaryota</taxon>
        <taxon>Viridiplantae</taxon>
        <taxon>Streptophyta</taxon>
        <taxon>Embryophyta</taxon>
        <taxon>Tracheophyta</taxon>
        <taxon>Spermatophyta</taxon>
        <taxon>Magnoliopsida</taxon>
        <taxon>Liliopsida</taxon>
        <taxon>Poales</taxon>
        <taxon>Poaceae</taxon>
        <taxon>BOP clade</taxon>
        <taxon>Oryzoideae</taxon>
        <taxon>Oryzeae</taxon>
        <taxon>Oryzinae</taxon>
        <taxon>Oryza</taxon>
        <taxon>Oryza sativa</taxon>
    </lineage>
</organism>
<dbReference type="EC" id="1.11.1.6" evidence="4 7"/>
<dbReference type="EMBL" id="D26484">
    <property type="protein sequence ID" value="BAA05494.1"/>
    <property type="molecule type" value="mRNA"/>
</dbReference>
<dbReference type="EMBL" id="D64013">
    <property type="protein sequence ID" value="BAA34204.1"/>
    <property type="molecule type" value="Genomic_DNA"/>
</dbReference>
<dbReference type="EMBL" id="AP004685">
    <property type="protein sequence ID" value="BAD61813.1"/>
    <property type="molecule type" value="Genomic_DNA"/>
</dbReference>
<dbReference type="EMBL" id="AP008212">
    <property type="protein sequence ID" value="BAF20549.1"/>
    <property type="molecule type" value="Genomic_DNA"/>
</dbReference>
<dbReference type="EMBL" id="AP014962">
    <property type="protein sequence ID" value="BAS99609.1"/>
    <property type="molecule type" value="Genomic_DNA"/>
</dbReference>
<dbReference type="EMBL" id="CM000143">
    <property type="protein sequence ID" value="EAZ38347.1"/>
    <property type="molecule type" value="Genomic_DNA"/>
</dbReference>
<dbReference type="EMBL" id="AK069446">
    <property type="protein sequence ID" value="BAG91437.1"/>
    <property type="molecule type" value="mRNA"/>
</dbReference>
<dbReference type="EMBL" id="AK100019">
    <property type="protein sequence ID" value="BAG94401.1"/>
    <property type="molecule type" value="mRNA"/>
</dbReference>
<dbReference type="RefSeq" id="XP_015643077.1">
    <property type="nucleotide sequence ID" value="XM_015787591.1"/>
</dbReference>
<dbReference type="SMR" id="Q0D9C4"/>
<dbReference type="FunCoup" id="Q0D9C4">
    <property type="interactions" value="1939"/>
</dbReference>
<dbReference type="STRING" id="39947.Q0D9C4"/>
<dbReference type="PeroxiBase" id="5145">
    <property type="entry name" value="OsKat02"/>
</dbReference>
<dbReference type="PaxDb" id="39947-Q0D9C4"/>
<dbReference type="EnsemblPlants" id="Os06t0727200-01">
    <property type="protein sequence ID" value="Os06t0727200-01"/>
    <property type="gene ID" value="Os06g0727200"/>
</dbReference>
<dbReference type="EnsemblPlants" id="Os06t0727200-02">
    <property type="protein sequence ID" value="Os06t0727200-02"/>
    <property type="gene ID" value="Os06g0727200"/>
</dbReference>
<dbReference type="Gramene" id="Os06t0727200-01">
    <property type="protein sequence ID" value="Os06t0727200-01"/>
    <property type="gene ID" value="Os06g0727200"/>
</dbReference>
<dbReference type="Gramene" id="Os06t0727200-02">
    <property type="protein sequence ID" value="Os06t0727200-02"/>
    <property type="gene ID" value="Os06g0727200"/>
</dbReference>
<dbReference type="KEGG" id="dosa:Os06g0727200"/>
<dbReference type="eggNOG" id="KOG0047">
    <property type="taxonomic scope" value="Eukaryota"/>
</dbReference>
<dbReference type="HOGENOM" id="CLU_010645_2_0_1"/>
<dbReference type="InParanoid" id="Q0D9C4"/>
<dbReference type="OMA" id="KFRWNVF"/>
<dbReference type="OrthoDB" id="6880011at2759"/>
<dbReference type="BRENDA" id="1.11.1.6">
    <property type="organism ID" value="4460"/>
</dbReference>
<dbReference type="Proteomes" id="UP000000763">
    <property type="component" value="Chromosome 6"/>
</dbReference>
<dbReference type="Proteomes" id="UP000007752">
    <property type="component" value="Chromosome 6"/>
</dbReference>
<dbReference type="Proteomes" id="UP000059680">
    <property type="component" value="Chromosome 6"/>
</dbReference>
<dbReference type="GO" id="GO:0005737">
    <property type="term" value="C:cytoplasm"/>
    <property type="evidence" value="ECO:0000318"/>
    <property type="project" value="GO_Central"/>
</dbReference>
<dbReference type="GO" id="GO:0009514">
    <property type="term" value="C:glyoxysome"/>
    <property type="evidence" value="ECO:0007669"/>
    <property type="project" value="UniProtKB-SubCell"/>
</dbReference>
<dbReference type="GO" id="GO:0005777">
    <property type="term" value="C:peroxisome"/>
    <property type="evidence" value="ECO:0000314"/>
    <property type="project" value="UniProtKB"/>
</dbReference>
<dbReference type="GO" id="GO:0005886">
    <property type="term" value="C:plasma membrane"/>
    <property type="evidence" value="ECO:0000314"/>
    <property type="project" value="UniProtKB"/>
</dbReference>
<dbReference type="GO" id="GO:0004096">
    <property type="term" value="F:catalase activity"/>
    <property type="evidence" value="ECO:0000314"/>
    <property type="project" value="UniProtKB"/>
</dbReference>
<dbReference type="GO" id="GO:0020037">
    <property type="term" value="F:heme binding"/>
    <property type="evidence" value="ECO:0000318"/>
    <property type="project" value="GO_Central"/>
</dbReference>
<dbReference type="GO" id="GO:0046872">
    <property type="term" value="F:metal ion binding"/>
    <property type="evidence" value="ECO:0007669"/>
    <property type="project" value="UniProtKB-KW"/>
</dbReference>
<dbReference type="GO" id="GO:0007623">
    <property type="term" value="P:circadian rhythm"/>
    <property type="evidence" value="ECO:0000270"/>
    <property type="project" value="UniProtKB"/>
</dbReference>
<dbReference type="GO" id="GO:0042744">
    <property type="term" value="P:hydrogen peroxide catabolic process"/>
    <property type="evidence" value="ECO:0000318"/>
    <property type="project" value="GO_Central"/>
</dbReference>
<dbReference type="GO" id="GO:1900034">
    <property type="term" value="P:regulation of cellular response to heat"/>
    <property type="evidence" value="ECO:0000314"/>
    <property type="project" value="UniProtKB"/>
</dbReference>
<dbReference type="GO" id="GO:0009737">
    <property type="term" value="P:response to abscisic acid"/>
    <property type="evidence" value="ECO:0000270"/>
    <property type="project" value="UniProtKB"/>
</dbReference>
<dbReference type="GO" id="GO:0009646">
    <property type="term" value="P:response to absence of light"/>
    <property type="evidence" value="ECO:0000270"/>
    <property type="project" value="UniProtKB"/>
</dbReference>
<dbReference type="GO" id="GO:0046686">
    <property type="term" value="P:response to cadmium ion"/>
    <property type="evidence" value="ECO:0000270"/>
    <property type="project" value="UniProtKB"/>
</dbReference>
<dbReference type="GO" id="GO:0009408">
    <property type="term" value="P:response to heat"/>
    <property type="evidence" value="ECO:0000270"/>
    <property type="project" value="UniProtKB"/>
</dbReference>
<dbReference type="GO" id="GO:0042542">
    <property type="term" value="P:response to hydrogen peroxide"/>
    <property type="evidence" value="ECO:0000270"/>
    <property type="project" value="UniProtKB"/>
</dbReference>
<dbReference type="GO" id="GO:0009751">
    <property type="term" value="P:response to salicylic acid"/>
    <property type="evidence" value="ECO:0000270"/>
    <property type="project" value="UniProtKB"/>
</dbReference>
<dbReference type="GO" id="GO:1902074">
    <property type="term" value="P:response to salt"/>
    <property type="evidence" value="ECO:0000270"/>
    <property type="project" value="UniProtKB"/>
</dbReference>
<dbReference type="GO" id="GO:0009414">
    <property type="term" value="P:response to water deprivation"/>
    <property type="evidence" value="ECO:0000270"/>
    <property type="project" value="UniProtKB"/>
</dbReference>
<dbReference type="CDD" id="cd08154">
    <property type="entry name" value="catalase_clade_1"/>
    <property type="match status" value="1"/>
</dbReference>
<dbReference type="FunFam" id="2.40.180.10:FF:000002">
    <property type="entry name" value="Catalase"/>
    <property type="match status" value="1"/>
</dbReference>
<dbReference type="Gene3D" id="2.40.180.10">
    <property type="entry name" value="Catalase core domain"/>
    <property type="match status" value="1"/>
</dbReference>
<dbReference type="InterPro" id="IPR018028">
    <property type="entry name" value="Catalase"/>
</dbReference>
<dbReference type="InterPro" id="IPR024708">
    <property type="entry name" value="Catalase_AS"/>
</dbReference>
<dbReference type="InterPro" id="IPR024711">
    <property type="entry name" value="Catalase_clade1/3"/>
</dbReference>
<dbReference type="InterPro" id="IPR011614">
    <property type="entry name" value="Catalase_core"/>
</dbReference>
<dbReference type="InterPro" id="IPR002226">
    <property type="entry name" value="Catalase_haem_BS"/>
</dbReference>
<dbReference type="InterPro" id="IPR010582">
    <property type="entry name" value="Catalase_immune_responsive"/>
</dbReference>
<dbReference type="InterPro" id="IPR020835">
    <property type="entry name" value="Catalase_sf"/>
</dbReference>
<dbReference type="PANTHER" id="PTHR11465">
    <property type="entry name" value="CATALASE"/>
    <property type="match status" value="1"/>
</dbReference>
<dbReference type="PANTHER" id="PTHR11465:SF60">
    <property type="entry name" value="CATALASE ISOZYME B"/>
    <property type="match status" value="1"/>
</dbReference>
<dbReference type="Pfam" id="PF00199">
    <property type="entry name" value="Catalase"/>
    <property type="match status" value="1"/>
</dbReference>
<dbReference type="Pfam" id="PF06628">
    <property type="entry name" value="Catalase-rel"/>
    <property type="match status" value="1"/>
</dbReference>
<dbReference type="PIRSF" id="PIRSF038928">
    <property type="entry name" value="Catalase_clade1-3"/>
    <property type="match status" value="1"/>
</dbReference>
<dbReference type="PRINTS" id="PR00067">
    <property type="entry name" value="CATALASE"/>
</dbReference>
<dbReference type="SMART" id="SM01060">
    <property type="entry name" value="Catalase"/>
    <property type="match status" value="1"/>
</dbReference>
<dbReference type="SUPFAM" id="SSF56634">
    <property type="entry name" value="Heme-dependent catalase-like"/>
    <property type="match status" value="1"/>
</dbReference>
<dbReference type="PROSITE" id="PS00437">
    <property type="entry name" value="CATALASE_1"/>
    <property type="match status" value="1"/>
</dbReference>
<dbReference type="PROSITE" id="PS00438">
    <property type="entry name" value="CATALASE_2"/>
    <property type="match status" value="1"/>
</dbReference>
<dbReference type="PROSITE" id="PS51402">
    <property type="entry name" value="CATALASE_3"/>
    <property type="match status" value="1"/>
</dbReference>
<proteinExistence type="evidence at protein level"/>
<sequence length="492" mass="56587">MDPYKHRPSSGSNSTFWTTNSGAPVWNNNSALTVGERGPILLEDYHLIEKLAQFDRERIPERVVHARGASAKGFFEVTHDISHLTCADFLRAPGVQTPVIVRFSTVVHERGSPETLRDPRGFAVKFYTREGNFDLVGNNMPVFFIRDGMKFPDMVHAFKPSPKTNMQENWRIVDFFSHHPESLHMFSFLFDDVGIPLNYRHMEGFGVNTYTLINKDGKPHLVKFHWKPTCGVKCLLDDEAVTVGGTCHSHATKDLTDSIAAGNYPEWKLYIQTIDPDHEDRFDFDPLDVTKTWPEDIIPLQPVGRMVLNKNIDNFFAENEQLAFCPAIIVPGIHYSDDKLLQTRIFSYADTQRHRLGPNYLMLPVNAPKCAYHNNHHDGSMNFMHRDEEVNYFPSRFDAARHAEKVPIPPRVLTGCREKCVIDKENNFQQAGERYRSFDPARQDRFLQRWVDALSDPRITHELRGIWISYWSQCDASLGQKLASRLNLKPNM</sequence>
<name>CATA2_ORYSJ</name>
<reference key="1">
    <citation type="journal article" date="1994" name="Plant Physiol.">
        <title>A cDNA clone encoding a rice catalase isozyme.</title>
        <authorList>
            <person name="Morita S."/>
            <person name="Tasaka M."/>
            <person name="Fujisawa H."/>
            <person name="Ushimaru T."/>
            <person name="Tsuji H."/>
        </authorList>
    </citation>
    <scope>NUCLEOTIDE SEQUENCE [MRNA]</scope>
    <source>
        <strain>cv. Nipponbare</strain>
    </source>
</reference>
<reference key="2">
    <citation type="journal article" date="1998" name="Theor. Appl. Genet.">
        <title>Evolutionary relationship of plant catalase genes inferred from exon-intron structures: isozyme divergence after the separation of monocots and dicots.</title>
        <authorList>
            <person name="Iwamoto M."/>
            <person name="Maekawa M."/>
            <person name="Saito A."/>
            <person name="Higo H."/>
            <person name="Higo K."/>
        </authorList>
        <dbReference type="AGRICOLA" id="IND21967300"/>
    </citation>
    <scope>NUCLEOTIDE SEQUENCE [GENOMIC DNA]</scope>
    <source>
        <tissue>Seedling leaf</tissue>
    </source>
</reference>
<reference key="3">
    <citation type="journal article" date="2005" name="Nature">
        <title>The map-based sequence of the rice genome.</title>
        <authorList>
            <consortium name="International rice genome sequencing project (IRGSP)"/>
        </authorList>
    </citation>
    <scope>NUCLEOTIDE SEQUENCE [LARGE SCALE GENOMIC DNA]</scope>
    <source>
        <strain>cv. Nipponbare</strain>
    </source>
</reference>
<reference key="4">
    <citation type="journal article" date="2008" name="Nucleic Acids Res.">
        <title>The rice annotation project database (RAP-DB): 2008 update.</title>
        <authorList>
            <consortium name="The rice annotation project (RAP)"/>
        </authorList>
    </citation>
    <scope>GENOME REANNOTATION</scope>
    <source>
        <strain>cv. Nipponbare</strain>
    </source>
</reference>
<reference key="5">
    <citation type="journal article" date="2013" name="Rice">
        <title>Improvement of the Oryza sativa Nipponbare reference genome using next generation sequence and optical map data.</title>
        <authorList>
            <person name="Kawahara Y."/>
            <person name="de la Bastide M."/>
            <person name="Hamilton J.P."/>
            <person name="Kanamori H."/>
            <person name="McCombie W.R."/>
            <person name="Ouyang S."/>
            <person name="Schwartz D.C."/>
            <person name="Tanaka T."/>
            <person name="Wu J."/>
            <person name="Zhou S."/>
            <person name="Childs K.L."/>
            <person name="Davidson R.M."/>
            <person name="Lin H."/>
            <person name="Quesada-Ocampo L."/>
            <person name="Vaillancourt B."/>
            <person name="Sakai H."/>
            <person name="Lee S.S."/>
            <person name="Kim J."/>
            <person name="Numa H."/>
            <person name="Itoh T."/>
            <person name="Buell C.R."/>
            <person name="Matsumoto T."/>
        </authorList>
    </citation>
    <scope>GENOME REANNOTATION</scope>
    <source>
        <strain>cv. Nipponbare</strain>
    </source>
</reference>
<reference key="6">
    <citation type="journal article" date="2005" name="PLoS Biol.">
        <title>The genomes of Oryza sativa: a history of duplications.</title>
        <authorList>
            <person name="Yu J."/>
            <person name="Wang J."/>
            <person name="Lin W."/>
            <person name="Li S."/>
            <person name="Li H."/>
            <person name="Zhou J."/>
            <person name="Ni P."/>
            <person name="Dong W."/>
            <person name="Hu S."/>
            <person name="Zeng C."/>
            <person name="Zhang J."/>
            <person name="Zhang Y."/>
            <person name="Li R."/>
            <person name="Xu Z."/>
            <person name="Li S."/>
            <person name="Li X."/>
            <person name="Zheng H."/>
            <person name="Cong L."/>
            <person name="Lin L."/>
            <person name="Yin J."/>
            <person name="Geng J."/>
            <person name="Li G."/>
            <person name="Shi J."/>
            <person name="Liu J."/>
            <person name="Lv H."/>
            <person name="Li J."/>
            <person name="Wang J."/>
            <person name="Deng Y."/>
            <person name="Ran L."/>
            <person name="Shi X."/>
            <person name="Wang X."/>
            <person name="Wu Q."/>
            <person name="Li C."/>
            <person name="Ren X."/>
            <person name="Wang J."/>
            <person name="Wang X."/>
            <person name="Li D."/>
            <person name="Liu D."/>
            <person name="Zhang X."/>
            <person name="Ji Z."/>
            <person name="Zhao W."/>
            <person name="Sun Y."/>
            <person name="Zhang Z."/>
            <person name="Bao J."/>
            <person name="Han Y."/>
            <person name="Dong L."/>
            <person name="Ji J."/>
            <person name="Chen P."/>
            <person name="Wu S."/>
            <person name="Liu J."/>
            <person name="Xiao Y."/>
            <person name="Bu D."/>
            <person name="Tan J."/>
            <person name="Yang L."/>
            <person name="Ye C."/>
            <person name="Zhang J."/>
            <person name="Xu J."/>
            <person name="Zhou Y."/>
            <person name="Yu Y."/>
            <person name="Zhang B."/>
            <person name="Zhuang S."/>
            <person name="Wei H."/>
            <person name="Liu B."/>
            <person name="Lei M."/>
            <person name="Yu H."/>
            <person name="Li Y."/>
            <person name="Xu H."/>
            <person name="Wei S."/>
            <person name="He X."/>
            <person name="Fang L."/>
            <person name="Zhang Z."/>
            <person name="Zhang Y."/>
            <person name="Huang X."/>
            <person name="Su Z."/>
            <person name="Tong W."/>
            <person name="Li J."/>
            <person name="Tong Z."/>
            <person name="Li S."/>
            <person name="Ye J."/>
            <person name="Wang L."/>
            <person name="Fang L."/>
            <person name="Lei T."/>
            <person name="Chen C.-S."/>
            <person name="Chen H.-C."/>
            <person name="Xu Z."/>
            <person name="Li H."/>
            <person name="Huang H."/>
            <person name="Zhang F."/>
            <person name="Xu H."/>
            <person name="Li N."/>
            <person name="Zhao C."/>
            <person name="Li S."/>
            <person name="Dong L."/>
            <person name="Huang Y."/>
            <person name="Li L."/>
            <person name="Xi Y."/>
            <person name="Qi Q."/>
            <person name="Li W."/>
            <person name="Zhang B."/>
            <person name="Hu W."/>
            <person name="Zhang Y."/>
            <person name="Tian X."/>
            <person name="Jiao Y."/>
            <person name="Liang X."/>
            <person name="Jin J."/>
            <person name="Gao L."/>
            <person name="Zheng W."/>
            <person name="Hao B."/>
            <person name="Liu S.-M."/>
            <person name="Wang W."/>
            <person name="Yuan L."/>
            <person name="Cao M."/>
            <person name="McDermott J."/>
            <person name="Samudrala R."/>
            <person name="Wang J."/>
            <person name="Wong G.K.-S."/>
            <person name="Yang H."/>
        </authorList>
    </citation>
    <scope>NUCLEOTIDE SEQUENCE [LARGE SCALE GENOMIC DNA]</scope>
    <source>
        <strain>cv. Nipponbare</strain>
    </source>
</reference>
<reference key="7">
    <citation type="journal article" date="2003" name="Science">
        <title>Collection, mapping, and annotation of over 28,000 cDNA clones from japonica rice.</title>
        <authorList>
            <consortium name="The rice full-length cDNA consortium"/>
        </authorList>
    </citation>
    <scope>NUCLEOTIDE SEQUENCE [LARGE SCALE MRNA]</scope>
    <source>
        <strain>cv. Nipponbare</strain>
    </source>
</reference>
<reference key="8">
    <citation type="journal article" date="2011" name="Biosci. Biotechnol. Biochem.">
        <title>Cloning and characterization of catalases from rice, Oryza sativa L.</title>
        <authorList>
            <person name="Wutipraditkul N."/>
            <person name="Boonkomrat S."/>
            <person name="Buaboocha T."/>
        </authorList>
    </citation>
    <scope>BIOPHYSICOCHEMICAL PROPERTIES</scope>
    <scope>CATALYTIC ACTIVITY</scope>
    <scope>ACTIVITY REGULATION</scope>
    <scope>TISSUE SPECIFICITY</scope>
</reference>
<reference key="9">
    <citation type="journal article" date="2011" name="Plant Cell Physiol.">
        <title>ABA controls H(2)O(2) accumulation through the induction of OsCATB in rice leaves under water stress.</title>
        <authorList>
            <person name="Ye N."/>
            <person name="Zhu G."/>
            <person name="Liu Y."/>
            <person name="Li Y."/>
            <person name="Zhang J."/>
        </authorList>
    </citation>
    <scope>FUNCTION</scope>
    <scope>INDUCTION BY WATER STRESS AND ABSCISIC ACID</scope>
    <scope>SUBCELLULAR LOCATION</scope>
    <scope>TISSUE SPECIFICITY</scope>
    <source>
        <strain>cv. Yangdao 6</strain>
    </source>
</reference>
<reference key="10">
    <citation type="journal article" date="2012" name="Plant Physiol.">
        <title>Nitric oxide and protein S-nitrosylation are integral to hydrogen peroxide-induced leaf cell death in rice.</title>
        <authorList>
            <person name="Lin A."/>
            <person name="Wang Y."/>
            <person name="Tang J."/>
            <person name="Xue P."/>
            <person name="Li C."/>
            <person name="Liu L."/>
            <person name="Hu B."/>
            <person name="Yang F."/>
            <person name="Loake G.J."/>
            <person name="Chu C."/>
        </authorList>
    </citation>
    <scope>TISSUE SPECIFICITY</scope>
</reference>
<reference key="11">
    <citation type="journal article" date="2014" name="J. Plant Biol.">
        <title>Rice CatA, CatB, and CatC are involved in environmental stress response, root growth, and photorespiration, respectively.</title>
        <authorList>
            <person name="Joo J."/>
            <person name="Lee Y.H."/>
            <person name="Song S.I."/>
        </authorList>
    </citation>
    <scope>FUNCTION</scope>
    <scope>INDUCTION BY DARKNESS AND ABIOTIC STRESSES</scope>
    <scope>TISSUE SPECIFICITY</scope>
</reference>
<reference key="12">
    <citation type="journal article" date="2015" name="J. Hazard. Mater.">
        <title>Nitric oxide ameliorates zinc oxide nanoparticles-induced phytotoxicity in rice seedlings.</title>
        <authorList>
            <person name="Chen J."/>
            <person name="Liu X."/>
            <person name="Wang C."/>
            <person name="Yin S.-S."/>
            <person name="Li X.-L."/>
            <person name="Hu W.-J."/>
            <person name="Simon M."/>
            <person name="Shen Z.-J."/>
            <person name="Xiao Q."/>
            <person name="Chu C.-C."/>
            <person name="Peng X.-X."/>
            <person name="Zheng H.-L."/>
        </authorList>
    </citation>
    <scope>INDUCTION BY ZINC OXIDE NANOPARTICLES</scope>
    <source>
        <strain>cv. Jiafuzhan</strain>
    </source>
</reference>
<reference key="13">
    <citation type="journal article" date="2016" name="Mol. Plant">
        <title>Association-dissociation of glycolate oxidase with catalase in rice: a potential switch to modulate intracellular H2O2 levels.</title>
        <authorList>
            <person name="Zhang Z."/>
            <person name="Xu Y."/>
            <person name="Xie Z."/>
            <person name="Li X."/>
            <person name="He Z.-H."/>
            <person name="Peng X.-X."/>
        </authorList>
    </citation>
    <scope>TISSUE SPECIFICITY</scope>
    <scope>SUBCELLULAR LOCATION</scope>
    <scope>INTERACTION WITH GLO1 AND GLO4</scope>
    <source>
        <strain>cv. Zhonghua 11</strain>
    </source>
</reference>
<reference key="14">
    <citation type="journal article" date="2017" name="Plant Sci.">
        <title>OsMYB45 plays an important role in rice resistance to cadmium stress.</title>
        <authorList>
            <person name="Hu S."/>
            <person name="Yu Y."/>
            <person name="Chen Q."/>
            <person name="Mu G."/>
            <person name="Shen Z."/>
            <person name="Zheng L."/>
        </authorList>
    </citation>
    <scope>INHIBITION BY CADMIUM</scope>
</reference>
<reference key="15">
    <citation type="journal article" date="2018" name="Plant Cell">
        <title>The receptor-like cytoplasmic kinase STRK1 phosphorylates and activates CatC, thereby regulating H2O2 homeostasis and improving salt tolerance in rice.</title>
        <authorList>
            <person name="Zhou Y.-B."/>
            <person name="Liu C."/>
            <person name="Tang D.-Y."/>
            <person name="Yan L."/>
            <person name="Wang D."/>
            <person name="Yang Y.-Z."/>
            <person name="Gui J.-S."/>
            <person name="Zhao X.-Y."/>
            <person name="Li L.-G."/>
            <person name="Tang X.-D."/>
            <person name="Yu F."/>
            <person name="Li J.-L."/>
            <person name="Liu L.-L."/>
            <person name="Zhu Y.-H."/>
            <person name="Lin J.-Z."/>
            <person name="Liu X.-M."/>
        </authorList>
    </citation>
    <scope>INTERACTION WITH STRK1</scope>
    <scope>SUBCELLULAR LOCATION</scope>
    <source>
        <strain>cv. Kitaake</strain>
    </source>
</reference>
<reference key="16">
    <citation type="journal article" date="2018" name="Plant Cell Rep.">
        <title>Involvement of CAT in the detoxification of HT-induced ROS burst in rice anther and its relation to pollen fertility.</title>
        <authorList>
            <person name="Zhao Q."/>
            <person name="Zhou L."/>
            <person name="Liu J."/>
            <person name="Cao Z."/>
            <person name="Du X."/>
            <person name="Huang F."/>
            <person name="Pan G."/>
            <person name="Cheng F."/>
        </authorList>
    </citation>
    <scope>FUNCTION</scope>
    <scope>REPRESSION BY HEAT STRESS</scope>
    <scope>INDUCTION BY SALICYLIC ACID</scope>
    <scope>TISSUE SPECIFICITY</scope>
    <source>
        <strain>cv. Qianjiang3</strain>
        <strain>cv. Xieqingzao</strain>
    </source>
</reference>
<feature type="chain" id="PRO_0000084953" description="Catalase isozyme B">
    <location>
        <begin position="1"/>
        <end position="492"/>
    </location>
</feature>
<feature type="region of interest" description="Disordered" evidence="5">
    <location>
        <begin position="1"/>
        <end position="20"/>
    </location>
</feature>
<feature type="short sequence motif" description="Peroxisome targeting signal" evidence="16">
    <location>
        <begin position="484"/>
        <end position="492"/>
    </location>
</feature>
<feature type="compositionally biased region" description="Polar residues" evidence="5">
    <location>
        <begin position="9"/>
        <end position="20"/>
    </location>
</feature>
<feature type="active site" evidence="4">
    <location>
        <position position="65"/>
    </location>
</feature>
<feature type="active site" evidence="3">
    <location>
        <position position="138"/>
    </location>
</feature>
<feature type="binding site" evidence="3">
    <location>
        <position position="62"/>
    </location>
    <ligand>
        <name>heme</name>
        <dbReference type="ChEBI" id="CHEBI:30413"/>
    </ligand>
</feature>
<feature type="binding site" evidence="3">
    <location>
        <position position="102"/>
    </location>
    <ligand>
        <name>heme</name>
        <dbReference type="ChEBI" id="CHEBI:30413"/>
    </ligand>
</feature>
<feature type="binding site" evidence="3">
    <location>
        <position position="151"/>
    </location>
    <ligand>
        <name>heme</name>
        <dbReference type="ChEBI" id="CHEBI:30413"/>
    </ligand>
</feature>
<feature type="binding site" evidence="3">
    <location>
        <position position="344"/>
    </location>
    <ligand>
        <name>heme</name>
        <dbReference type="ChEBI" id="CHEBI:30413"/>
    </ligand>
</feature>
<feature type="binding site" description="axial binding residue" evidence="3">
    <location>
        <position position="348"/>
    </location>
    <ligand>
        <name>heme</name>
        <dbReference type="ChEBI" id="CHEBI:30413"/>
    </ligand>
    <ligandPart>
        <name>Fe</name>
        <dbReference type="ChEBI" id="CHEBI:18248"/>
    </ligandPart>
</feature>
<feature type="binding site" evidence="3">
    <location>
        <position position="355"/>
    </location>
    <ligand>
        <name>heme</name>
        <dbReference type="ChEBI" id="CHEBI:30413"/>
    </ligand>
</feature>
<feature type="modified residue" description="Phosphotyrosine" evidence="1">
    <location>
        <position position="210"/>
    </location>
</feature>
<feature type="cross-link" description="3-(S-cysteinyl)-tyrosine (Cys-Tyr)" evidence="3">
    <location>
        <begin position="325"/>
        <end position="348"/>
    </location>
</feature>
<feature type="sequence conflict" description="In Ref. 1; BAA05494." evidence="15" ref="1">
    <original>P</original>
    <variation>A</variation>
    <location>
        <position position="8"/>
    </location>
</feature>
<feature type="sequence conflict" description="In Ref. 2; BAA34204." evidence="15" ref="2">
    <original>D</original>
    <variation>E</variation>
    <location>
        <position position="118"/>
    </location>
</feature>
<feature type="sequence conflict" description="In Ref. 1; BAA05494." evidence="15" ref="1">
    <original>V</original>
    <variation>G</variation>
    <location>
        <position position="142"/>
    </location>
</feature>
<feature type="sequence conflict" description="In Ref. 2; BAA34204." evidence="15" ref="2">
    <original>Y</original>
    <variation>H</variation>
    <location>
        <position position="199"/>
    </location>
</feature>
<gene>
    <name type="primary">CATB</name>
    <name type="ordered locus">Os06g0727200</name>
    <name type="ordered locus">LOC_Os06g51150</name>
    <name type="ORF">OsJ_021830</name>
    <name type="ORF">P0017G10.17</name>
</gene>